<keyword id="KW-0056">Arginine metabolism</keyword>
<keyword id="KW-0378">Hydrolase</keyword>
<dbReference type="EC" id="3.5.3.23" evidence="1"/>
<dbReference type="EMBL" id="CP000076">
    <property type="protein sequence ID" value="AAY93758.1"/>
    <property type="molecule type" value="Genomic_DNA"/>
</dbReference>
<dbReference type="RefSeq" id="WP_011062767.1">
    <property type="nucleotide sequence ID" value="NC_004129.6"/>
</dbReference>
<dbReference type="SMR" id="Q4K838"/>
<dbReference type="STRING" id="220664.PFL_4511"/>
<dbReference type="GeneID" id="57477588"/>
<dbReference type="KEGG" id="pfl:PFL_4511"/>
<dbReference type="PATRIC" id="fig|220664.5.peg.4612"/>
<dbReference type="eggNOG" id="COG3724">
    <property type="taxonomic scope" value="Bacteria"/>
</dbReference>
<dbReference type="HOGENOM" id="CLU_053835_0_0_6"/>
<dbReference type="UniPathway" id="UPA00185">
    <property type="reaction ID" value="UER00280"/>
</dbReference>
<dbReference type="Proteomes" id="UP000008540">
    <property type="component" value="Chromosome"/>
</dbReference>
<dbReference type="GO" id="GO:0009015">
    <property type="term" value="F:N-succinylarginine dihydrolase activity"/>
    <property type="evidence" value="ECO:0007669"/>
    <property type="project" value="UniProtKB-UniRule"/>
</dbReference>
<dbReference type="GO" id="GO:0019544">
    <property type="term" value="P:arginine catabolic process to glutamate"/>
    <property type="evidence" value="ECO:0007669"/>
    <property type="project" value="UniProtKB-UniRule"/>
</dbReference>
<dbReference type="GO" id="GO:0019545">
    <property type="term" value="P:arginine catabolic process to succinate"/>
    <property type="evidence" value="ECO:0007669"/>
    <property type="project" value="UniProtKB-UniRule"/>
</dbReference>
<dbReference type="FunFam" id="3.75.10.20:FF:000001">
    <property type="entry name" value="N-succinylarginine dihydrolase"/>
    <property type="match status" value="1"/>
</dbReference>
<dbReference type="Gene3D" id="3.75.10.20">
    <property type="entry name" value="Succinylarginine dihydrolase"/>
    <property type="match status" value="1"/>
</dbReference>
<dbReference type="HAMAP" id="MF_01172">
    <property type="entry name" value="AstB"/>
    <property type="match status" value="1"/>
</dbReference>
<dbReference type="InterPro" id="IPR037031">
    <property type="entry name" value="AstB_sf"/>
</dbReference>
<dbReference type="InterPro" id="IPR007079">
    <property type="entry name" value="SuccinylArg_d-Hdrlase_AstB"/>
</dbReference>
<dbReference type="NCBIfam" id="TIGR03241">
    <property type="entry name" value="arg_catab_astB"/>
    <property type="match status" value="1"/>
</dbReference>
<dbReference type="NCBIfam" id="NF009789">
    <property type="entry name" value="PRK13281.1"/>
    <property type="match status" value="1"/>
</dbReference>
<dbReference type="PANTHER" id="PTHR30420">
    <property type="entry name" value="N-SUCCINYLARGININE DIHYDROLASE"/>
    <property type="match status" value="1"/>
</dbReference>
<dbReference type="PANTHER" id="PTHR30420:SF2">
    <property type="entry name" value="N-SUCCINYLARGININE DIHYDROLASE"/>
    <property type="match status" value="1"/>
</dbReference>
<dbReference type="Pfam" id="PF04996">
    <property type="entry name" value="AstB"/>
    <property type="match status" value="1"/>
</dbReference>
<dbReference type="SUPFAM" id="SSF55909">
    <property type="entry name" value="Pentein"/>
    <property type="match status" value="1"/>
</dbReference>
<gene>
    <name evidence="1" type="primary">astB</name>
    <name type="ordered locus">PFL_4511</name>
</gene>
<protein>
    <recommendedName>
        <fullName evidence="1">N-succinylarginine dihydrolase</fullName>
        <ecNumber evidence="1">3.5.3.23</ecNumber>
    </recommendedName>
</protein>
<reference key="1">
    <citation type="journal article" date="2005" name="Nat. Biotechnol.">
        <title>Complete genome sequence of the plant commensal Pseudomonas fluorescens Pf-5.</title>
        <authorList>
            <person name="Paulsen I.T."/>
            <person name="Press C.M."/>
            <person name="Ravel J."/>
            <person name="Kobayashi D.Y."/>
            <person name="Myers G.S.A."/>
            <person name="Mavrodi D.V."/>
            <person name="DeBoy R.T."/>
            <person name="Seshadri R."/>
            <person name="Ren Q."/>
            <person name="Madupu R."/>
            <person name="Dodson R.J."/>
            <person name="Durkin A.S."/>
            <person name="Brinkac L.M."/>
            <person name="Daugherty S.C."/>
            <person name="Sullivan S.A."/>
            <person name="Rosovitz M.J."/>
            <person name="Gwinn M.L."/>
            <person name="Zhou L."/>
            <person name="Schneider D.J."/>
            <person name="Cartinhour S.W."/>
            <person name="Nelson W.C."/>
            <person name="Weidman J."/>
            <person name="Watkins K."/>
            <person name="Tran K."/>
            <person name="Khouri H."/>
            <person name="Pierson E.A."/>
            <person name="Pierson L.S. III"/>
            <person name="Thomashow L.S."/>
            <person name="Loper J.E."/>
        </authorList>
    </citation>
    <scope>NUCLEOTIDE SEQUENCE [LARGE SCALE GENOMIC DNA]</scope>
    <source>
        <strain>ATCC BAA-477 / NRRL B-23932 / Pf-5</strain>
    </source>
</reference>
<sequence length="448" mass="48802">MKSYEVNFDGLVGPTHNYGGLSYGNVASQSNSQQGSNPREAALQGLAKMKALMEMGFQQGVLAPQERPDVAALRNLGFAGTDAQVIQQAAKQAMPLLVASCSASSMWVANAATVSPSADTADGRVHFTAANLNCKYHRSIEHPTTSRVLGAMFADQKHFAHHAALPAVAQFGDEGAANHTRFCRDYGQAGVEFFVFGRSAFDTRYPAPQKYPARQTLEASQAVARLHGLSEEGVVYAQQNPSVIDQGVFHNDVIAVGNGEVLFYHEDAFLETDKMLAELQGKLGKRGGNFQSICVPRSQVTVEDAVRSYLFNSQLLSRADGSMLLIVPEECRGNERVWQYLQSLTSSGGLIREVKVFDLKQSMQNGGGPACLRLRVALKETELAAVNPGVIMTAPLYDTLTQWVGKHYRDRLSESDLADPQLLLECRTALDELTQILKLGAVYPFQIN</sequence>
<feature type="chain" id="PRO_0000262365" description="N-succinylarginine dihydrolase">
    <location>
        <begin position="1"/>
        <end position="448"/>
    </location>
</feature>
<feature type="active site" evidence="1">
    <location>
        <position position="174"/>
    </location>
</feature>
<feature type="active site" evidence="1">
    <location>
        <position position="250"/>
    </location>
</feature>
<feature type="active site" description="Nucleophile" evidence="1">
    <location>
        <position position="371"/>
    </location>
</feature>
<feature type="binding site" evidence="1">
    <location>
        <begin position="19"/>
        <end position="28"/>
    </location>
    <ligand>
        <name>substrate</name>
    </ligand>
</feature>
<feature type="binding site" evidence="1">
    <location>
        <position position="110"/>
    </location>
    <ligand>
        <name>substrate</name>
    </ligand>
</feature>
<feature type="binding site" evidence="1">
    <location>
        <begin position="137"/>
        <end position="138"/>
    </location>
    <ligand>
        <name>substrate</name>
    </ligand>
</feature>
<feature type="binding site" evidence="1">
    <location>
        <position position="214"/>
    </location>
    <ligand>
        <name>substrate</name>
    </ligand>
</feature>
<feature type="binding site" evidence="1">
    <location>
        <position position="252"/>
    </location>
    <ligand>
        <name>substrate</name>
    </ligand>
</feature>
<feature type="binding site" evidence="1">
    <location>
        <position position="365"/>
    </location>
    <ligand>
        <name>substrate</name>
    </ligand>
</feature>
<organism>
    <name type="scientific">Pseudomonas fluorescens (strain ATCC BAA-477 / NRRL B-23932 / Pf-5)</name>
    <dbReference type="NCBI Taxonomy" id="220664"/>
    <lineage>
        <taxon>Bacteria</taxon>
        <taxon>Pseudomonadati</taxon>
        <taxon>Pseudomonadota</taxon>
        <taxon>Gammaproteobacteria</taxon>
        <taxon>Pseudomonadales</taxon>
        <taxon>Pseudomonadaceae</taxon>
        <taxon>Pseudomonas</taxon>
    </lineage>
</organism>
<comment type="function">
    <text evidence="1">Catalyzes the hydrolysis of N(2)-succinylarginine into N(2)-succinylornithine, ammonia and CO(2).</text>
</comment>
<comment type="catalytic activity">
    <reaction evidence="1">
        <text>N(2)-succinyl-L-arginine + 2 H2O + 2 H(+) = N(2)-succinyl-L-ornithine + 2 NH4(+) + CO2</text>
        <dbReference type="Rhea" id="RHEA:19533"/>
        <dbReference type="ChEBI" id="CHEBI:15377"/>
        <dbReference type="ChEBI" id="CHEBI:15378"/>
        <dbReference type="ChEBI" id="CHEBI:16526"/>
        <dbReference type="ChEBI" id="CHEBI:28938"/>
        <dbReference type="ChEBI" id="CHEBI:58241"/>
        <dbReference type="ChEBI" id="CHEBI:58514"/>
        <dbReference type="EC" id="3.5.3.23"/>
    </reaction>
</comment>
<comment type="pathway">
    <text evidence="1">Amino-acid degradation; L-arginine degradation via AST pathway; L-glutamate and succinate from L-arginine: step 2/5.</text>
</comment>
<comment type="subunit">
    <text evidence="1">Homodimer.</text>
</comment>
<comment type="similarity">
    <text evidence="1">Belongs to the succinylarginine dihydrolase family.</text>
</comment>
<name>ASTB_PSEF5</name>
<proteinExistence type="inferred from homology"/>
<evidence type="ECO:0000255" key="1">
    <source>
        <dbReference type="HAMAP-Rule" id="MF_01172"/>
    </source>
</evidence>
<accession>Q4K838</accession>